<dbReference type="EMBL" id="EF115543">
    <property type="protein sequence ID" value="ABK79563.1"/>
    <property type="molecule type" value="Genomic_DNA"/>
</dbReference>
<dbReference type="RefSeq" id="YP_874719.1">
    <property type="nucleotide sequence ID" value="NC_008591.1"/>
</dbReference>
<dbReference type="SMR" id="A1E9Z1"/>
<dbReference type="GeneID" id="4524974"/>
<dbReference type="GO" id="GO:0009535">
    <property type="term" value="C:chloroplast thylakoid membrane"/>
    <property type="evidence" value="ECO:0007669"/>
    <property type="project" value="UniProtKB-SubCell"/>
</dbReference>
<dbReference type="GO" id="GO:0009539">
    <property type="term" value="C:photosystem II reaction center"/>
    <property type="evidence" value="ECO:0007669"/>
    <property type="project" value="InterPro"/>
</dbReference>
<dbReference type="GO" id="GO:0015979">
    <property type="term" value="P:photosynthesis"/>
    <property type="evidence" value="ECO:0007669"/>
    <property type="project" value="UniProtKB-UniRule"/>
</dbReference>
<dbReference type="HAMAP" id="MF_00441">
    <property type="entry name" value="PSII_PsbK"/>
    <property type="match status" value="1"/>
</dbReference>
<dbReference type="InterPro" id="IPR003687">
    <property type="entry name" value="PSII_PsbK"/>
</dbReference>
<dbReference type="InterPro" id="IPR037270">
    <property type="entry name" value="PSII_PsbK_sf"/>
</dbReference>
<dbReference type="NCBIfam" id="NF002715">
    <property type="entry name" value="PRK02553.1"/>
    <property type="match status" value="1"/>
</dbReference>
<dbReference type="PANTHER" id="PTHR35325">
    <property type="match status" value="1"/>
</dbReference>
<dbReference type="PANTHER" id="PTHR35325:SF1">
    <property type="entry name" value="PHOTOSYSTEM II REACTION CENTER PROTEIN K"/>
    <property type="match status" value="1"/>
</dbReference>
<dbReference type="Pfam" id="PF02533">
    <property type="entry name" value="PsbK"/>
    <property type="match status" value="1"/>
</dbReference>
<dbReference type="SUPFAM" id="SSF161037">
    <property type="entry name" value="Photosystem II reaction center protein K, PsbK"/>
    <property type="match status" value="1"/>
</dbReference>
<organism>
    <name type="scientific">Agrostis stolonifera</name>
    <name type="common">Creeping bentgrass</name>
    <dbReference type="NCBI Taxonomy" id="63632"/>
    <lineage>
        <taxon>Eukaryota</taxon>
        <taxon>Viridiplantae</taxon>
        <taxon>Streptophyta</taxon>
        <taxon>Embryophyta</taxon>
        <taxon>Tracheophyta</taxon>
        <taxon>Spermatophyta</taxon>
        <taxon>Magnoliopsida</taxon>
        <taxon>Liliopsida</taxon>
        <taxon>Poales</taxon>
        <taxon>Poaceae</taxon>
        <taxon>BOP clade</taxon>
        <taxon>Pooideae</taxon>
        <taxon>Poodae</taxon>
        <taxon>Poeae</taxon>
        <taxon>Poeae Chloroplast Group 1 (Aveneae type)</taxon>
        <taxon>Agrostidodinae</taxon>
        <taxon>Agrostidinae</taxon>
        <taxon>Agrostis</taxon>
    </lineage>
</organism>
<name>PSBK_AGRST</name>
<proteinExistence type="inferred from homology"/>
<feature type="propeptide" id="PRO_0000276124" evidence="1">
    <location>
        <begin position="1"/>
        <end position="25"/>
    </location>
</feature>
<feature type="chain" id="PRO_0000276125" description="Photosystem II reaction center protein K" evidence="1">
    <location>
        <begin position="26"/>
        <end position="62"/>
    </location>
</feature>
<feature type="transmembrane region" description="Helical" evidence="1">
    <location>
        <begin position="33"/>
        <end position="53"/>
    </location>
</feature>
<keyword id="KW-0150">Chloroplast</keyword>
<keyword id="KW-0472">Membrane</keyword>
<keyword id="KW-0602">Photosynthesis</keyword>
<keyword id="KW-0604">Photosystem II</keyword>
<keyword id="KW-0934">Plastid</keyword>
<keyword id="KW-0674">Reaction center</keyword>
<keyword id="KW-0793">Thylakoid</keyword>
<keyword id="KW-0812">Transmembrane</keyword>
<keyword id="KW-1133">Transmembrane helix</keyword>
<accession>A1E9Z1</accession>
<protein>
    <recommendedName>
        <fullName evidence="1">Photosystem II reaction center protein K</fullName>
        <shortName evidence="1">PSII-K</shortName>
    </recommendedName>
</protein>
<gene>
    <name evidence="1" type="primary">psbK</name>
</gene>
<sequence>MPNILSLTCICFNSVLYPTTSFFFAKLPEAYAIFNPIVDVMPVIPLFFFLLAFVWQAAVSFR</sequence>
<reference key="1">
    <citation type="journal article" date="2007" name="Theor. Appl. Genet.">
        <title>Complete chloroplast genome sequences of Hordeum vulgare, Sorghum bicolor and Agrostis stolonifera, and comparative analyses with other grass genomes.</title>
        <authorList>
            <person name="Saski C."/>
            <person name="Lee S.-B."/>
            <person name="Fjellheim S."/>
            <person name="Guda C."/>
            <person name="Jansen R.K."/>
            <person name="Luo H."/>
            <person name="Tomkins J."/>
            <person name="Rognli O.A."/>
            <person name="Daniell H."/>
            <person name="Clarke J.L."/>
        </authorList>
    </citation>
    <scope>NUCLEOTIDE SEQUENCE [LARGE SCALE GENOMIC DNA]</scope>
    <source>
        <strain>cv. Penn A-4</strain>
    </source>
</reference>
<comment type="function">
    <text evidence="1">One of the components of the core complex of photosystem II (PSII). PSII is a light-driven water:plastoquinone oxidoreductase that uses light energy to abstract electrons from H(2)O, generating O(2) and a proton gradient subsequently used for ATP formation. It consists of a core antenna complex that captures photons, and an electron transfer chain that converts photonic excitation into a charge separation.</text>
</comment>
<comment type="subunit">
    <text evidence="1">PSII is composed of 1 copy each of membrane proteins PsbA, PsbB, PsbC, PsbD, PsbE, PsbF, PsbH, PsbI, PsbJ, PsbK, PsbL, PsbM, PsbT, PsbX, PsbY, PsbZ, Psb30/Ycf12, at least 3 peripheral proteins of the oxygen-evolving complex and a large number of cofactors. It forms dimeric complexes.</text>
</comment>
<comment type="subcellular location">
    <subcellularLocation>
        <location evidence="1">Plastid</location>
        <location evidence="1">Chloroplast thylakoid membrane</location>
        <topology evidence="1">Single-pass membrane protein</topology>
    </subcellularLocation>
</comment>
<comment type="similarity">
    <text evidence="1">Belongs to the PsbK family.</text>
</comment>
<evidence type="ECO:0000255" key="1">
    <source>
        <dbReference type="HAMAP-Rule" id="MF_00441"/>
    </source>
</evidence>
<geneLocation type="chloroplast"/>